<dbReference type="EC" id="6.3.4.4" evidence="2"/>
<dbReference type="EMBL" id="KN305533">
    <property type="protein sequence ID" value="EEH20148.2"/>
    <property type="status" value="ALT_INIT"/>
    <property type="molecule type" value="Genomic_DNA"/>
</dbReference>
<dbReference type="SMR" id="C0S3Z3"/>
<dbReference type="HOGENOM" id="CLU_029848_3_2_1"/>
<dbReference type="OrthoDB" id="29094at33183"/>
<dbReference type="UniPathway" id="UPA00075">
    <property type="reaction ID" value="UER00335"/>
</dbReference>
<dbReference type="GO" id="GO:0005737">
    <property type="term" value="C:cytoplasm"/>
    <property type="evidence" value="ECO:0007669"/>
    <property type="project" value="UniProtKB-SubCell"/>
</dbReference>
<dbReference type="GO" id="GO:0004019">
    <property type="term" value="F:adenylosuccinate synthase activity"/>
    <property type="evidence" value="ECO:0007669"/>
    <property type="project" value="UniProtKB-UniRule"/>
</dbReference>
<dbReference type="GO" id="GO:0005525">
    <property type="term" value="F:GTP binding"/>
    <property type="evidence" value="ECO:0007669"/>
    <property type="project" value="UniProtKB-UniRule"/>
</dbReference>
<dbReference type="GO" id="GO:0000287">
    <property type="term" value="F:magnesium ion binding"/>
    <property type="evidence" value="ECO:0007669"/>
    <property type="project" value="UniProtKB-UniRule"/>
</dbReference>
<dbReference type="GO" id="GO:0044208">
    <property type="term" value="P:'de novo' AMP biosynthetic process"/>
    <property type="evidence" value="ECO:0007669"/>
    <property type="project" value="UniProtKB-UniRule"/>
</dbReference>
<dbReference type="GO" id="GO:0046040">
    <property type="term" value="P:IMP metabolic process"/>
    <property type="evidence" value="ECO:0007669"/>
    <property type="project" value="TreeGrafter"/>
</dbReference>
<dbReference type="CDD" id="cd03108">
    <property type="entry name" value="AdSS"/>
    <property type="match status" value="1"/>
</dbReference>
<dbReference type="FunFam" id="1.10.300.10:FF:000001">
    <property type="entry name" value="Adenylosuccinate synthetase"/>
    <property type="match status" value="1"/>
</dbReference>
<dbReference type="FunFam" id="3.90.170.10:FF:000001">
    <property type="entry name" value="Adenylosuccinate synthetase"/>
    <property type="match status" value="1"/>
</dbReference>
<dbReference type="Gene3D" id="3.40.440.10">
    <property type="entry name" value="Adenylosuccinate Synthetase, subunit A, domain 1"/>
    <property type="match status" value="1"/>
</dbReference>
<dbReference type="Gene3D" id="1.10.300.10">
    <property type="entry name" value="Adenylosuccinate Synthetase, subunit A, domain 2"/>
    <property type="match status" value="1"/>
</dbReference>
<dbReference type="Gene3D" id="3.90.170.10">
    <property type="entry name" value="Adenylosuccinate Synthetase, subunit A, domain 3"/>
    <property type="match status" value="1"/>
</dbReference>
<dbReference type="HAMAP" id="MF_00011">
    <property type="entry name" value="Adenylosucc_synth"/>
    <property type="match status" value="1"/>
</dbReference>
<dbReference type="InterPro" id="IPR018220">
    <property type="entry name" value="Adenylosuccin_syn_GTP-bd"/>
</dbReference>
<dbReference type="InterPro" id="IPR033128">
    <property type="entry name" value="Adenylosuccin_syn_Lys_AS"/>
</dbReference>
<dbReference type="InterPro" id="IPR042109">
    <property type="entry name" value="Adenylosuccinate_synth_dom1"/>
</dbReference>
<dbReference type="InterPro" id="IPR042110">
    <property type="entry name" value="Adenylosuccinate_synth_dom2"/>
</dbReference>
<dbReference type="InterPro" id="IPR042111">
    <property type="entry name" value="Adenylosuccinate_synth_dom3"/>
</dbReference>
<dbReference type="InterPro" id="IPR001114">
    <property type="entry name" value="Adenylosuccinate_synthetase"/>
</dbReference>
<dbReference type="InterPro" id="IPR027417">
    <property type="entry name" value="P-loop_NTPase"/>
</dbReference>
<dbReference type="NCBIfam" id="NF002223">
    <property type="entry name" value="PRK01117.1"/>
    <property type="match status" value="1"/>
</dbReference>
<dbReference type="NCBIfam" id="TIGR00184">
    <property type="entry name" value="purA"/>
    <property type="match status" value="1"/>
</dbReference>
<dbReference type="PANTHER" id="PTHR11846">
    <property type="entry name" value="ADENYLOSUCCINATE SYNTHETASE"/>
    <property type="match status" value="1"/>
</dbReference>
<dbReference type="PANTHER" id="PTHR11846:SF0">
    <property type="entry name" value="ADENYLOSUCCINATE SYNTHETASE"/>
    <property type="match status" value="1"/>
</dbReference>
<dbReference type="Pfam" id="PF00709">
    <property type="entry name" value="Adenylsucc_synt"/>
    <property type="match status" value="1"/>
</dbReference>
<dbReference type="SMART" id="SM00788">
    <property type="entry name" value="Adenylsucc_synt"/>
    <property type="match status" value="1"/>
</dbReference>
<dbReference type="SUPFAM" id="SSF52540">
    <property type="entry name" value="P-loop containing nucleoside triphosphate hydrolases"/>
    <property type="match status" value="1"/>
</dbReference>
<dbReference type="PROSITE" id="PS01266">
    <property type="entry name" value="ADENYLOSUCCIN_SYN_1"/>
    <property type="match status" value="1"/>
</dbReference>
<dbReference type="PROSITE" id="PS00513">
    <property type="entry name" value="ADENYLOSUCCIN_SYN_2"/>
    <property type="match status" value="1"/>
</dbReference>
<organism>
    <name type="scientific">Paracoccidioides brasiliensis (strain Pb03)</name>
    <dbReference type="NCBI Taxonomy" id="482561"/>
    <lineage>
        <taxon>Eukaryota</taxon>
        <taxon>Fungi</taxon>
        <taxon>Dikarya</taxon>
        <taxon>Ascomycota</taxon>
        <taxon>Pezizomycotina</taxon>
        <taxon>Eurotiomycetes</taxon>
        <taxon>Eurotiomycetidae</taxon>
        <taxon>Onygenales</taxon>
        <taxon>Ajellomycetaceae</taxon>
        <taxon>Paracoccidioides</taxon>
    </lineage>
</organism>
<reference key="1">
    <citation type="journal article" date="2011" name="PLoS Genet.">
        <title>Comparative genomic analysis of human fungal pathogens causing paracoccidioidomycosis.</title>
        <authorList>
            <person name="Desjardins C.A."/>
            <person name="Champion M.D."/>
            <person name="Holder J.W."/>
            <person name="Muszewska A."/>
            <person name="Goldberg J."/>
            <person name="Bailao A.M."/>
            <person name="Brigido M.M."/>
            <person name="Ferreira M.E."/>
            <person name="Garcia A.M."/>
            <person name="Grynberg M."/>
            <person name="Gujja S."/>
            <person name="Heiman D.I."/>
            <person name="Henn M.R."/>
            <person name="Kodira C.D."/>
            <person name="Leon-Narvaez H."/>
            <person name="Longo L.V.G."/>
            <person name="Ma L.-J."/>
            <person name="Malavazi I."/>
            <person name="Matsuo A.L."/>
            <person name="Morais F.V."/>
            <person name="Pereira M."/>
            <person name="Rodriguez-Brito S."/>
            <person name="Sakthikumar S."/>
            <person name="Salem-Izacc S.M."/>
            <person name="Sykes S.M."/>
            <person name="Teixeira M.M."/>
            <person name="Vallejo M.C."/>
            <person name="Walter M.E."/>
            <person name="Yandava C."/>
            <person name="Young S."/>
            <person name="Zeng Q."/>
            <person name="Zucker J."/>
            <person name="Felipe M.S."/>
            <person name="Goldman G.H."/>
            <person name="Haas B.J."/>
            <person name="McEwen J.G."/>
            <person name="Nino-Vega G."/>
            <person name="Puccia R."/>
            <person name="San-Blas G."/>
            <person name="Soares C.M."/>
            <person name="Birren B.W."/>
            <person name="Cuomo C.A."/>
        </authorList>
    </citation>
    <scope>NUCLEOTIDE SEQUENCE [LARGE SCALE GENOMIC DNA]</scope>
    <source>
        <strain>Pb03</strain>
    </source>
</reference>
<accession>C0S3Z3</accession>
<comment type="function">
    <text evidence="1">Plays an important role in the de novo pathway and in the salvage pathway of purine nucleotide biosynthesis. Catalyzes the first committed step in the biosynthesis of AMP from IMP (By similarity).</text>
</comment>
<comment type="catalytic activity">
    <reaction evidence="2">
        <text>IMP + L-aspartate + GTP = N(6)-(1,2-dicarboxyethyl)-AMP + GDP + phosphate + 2 H(+)</text>
        <dbReference type="Rhea" id="RHEA:15753"/>
        <dbReference type="ChEBI" id="CHEBI:15378"/>
        <dbReference type="ChEBI" id="CHEBI:29991"/>
        <dbReference type="ChEBI" id="CHEBI:37565"/>
        <dbReference type="ChEBI" id="CHEBI:43474"/>
        <dbReference type="ChEBI" id="CHEBI:57567"/>
        <dbReference type="ChEBI" id="CHEBI:58053"/>
        <dbReference type="ChEBI" id="CHEBI:58189"/>
        <dbReference type="EC" id="6.3.4.4"/>
    </reaction>
</comment>
<comment type="cofactor">
    <cofactor evidence="2">
        <name>Mg(2+)</name>
        <dbReference type="ChEBI" id="CHEBI:18420"/>
    </cofactor>
    <text evidence="2">Binds 1 Mg(2+) ion per subunit.</text>
</comment>
<comment type="pathway">
    <text evidence="2">Purine metabolism; AMP biosynthesis via de novo pathway; AMP from IMP: step 1/2.</text>
</comment>
<comment type="subunit">
    <text evidence="2">Homodimer.</text>
</comment>
<comment type="subcellular location">
    <subcellularLocation>
        <location evidence="2">Cytoplasm</location>
    </subcellularLocation>
</comment>
<comment type="similarity">
    <text evidence="2">Belongs to the adenylosuccinate synthetase family.</text>
</comment>
<comment type="sequence caution" evidence="3">
    <conflict type="erroneous initiation">
        <sequence resource="EMBL-CDS" id="EEH20148"/>
    </conflict>
    <text>Extended N-terminus.</text>
</comment>
<gene>
    <name type="ORF">PABG_02407</name>
</gene>
<feature type="chain" id="PRO_0000399349" description="Adenylosuccinate synthetase">
    <location>
        <begin position="1"/>
        <end position="421"/>
    </location>
</feature>
<feature type="active site" description="Proton acceptor" evidence="2">
    <location>
        <position position="12"/>
    </location>
</feature>
<feature type="active site" description="Proton donor" evidence="2">
    <location>
        <position position="40"/>
    </location>
</feature>
<feature type="binding site" evidence="2">
    <location>
        <begin position="11"/>
        <end position="17"/>
    </location>
    <ligand>
        <name>GTP</name>
        <dbReference type="ChEBI" id="CHEBI:37565"/>
    </ligand>
</feature>
<feature type="binding site" description="in other chain" evidence="2">
    <location>
        <begin position="12"/>
        <end position="15"/>
    </location>
    <ligand>
        <name>IMP</name>
        <dbReference type="ChEBI" id="CHEBI:58053"/>
        <note>ligand shared between dimeric partners</note>
    </ligand>
</feature>
<feature type="binding site" evidence="2">
    <location>
        <position position="12"/>
    </location>
    <ligand>
        <name>Mg(2+)</name>
        <dbReference type="ChEBI" id="CHEBI:18420"/>
    </ligand>
</feature>
<feature type="binding site" description="in other chain" evidence="2">
    <location>
        <begin position="37"/>
        <end position="40"/>
    </location>
    <ligand>
        <name>IMP</name>
        <dbReference type="ChEBI" id="CHEBI:58053"/>
        <note>ligand shared between dimeric partners</note>
    </ligand>
</feature>
<feature type="binding site" evidence="2">
    <location>
        <begin position="39"/>
        <end position="41"/>
    </location>
    <ligand>
        <name>GTP</name>
        <dbReference type="ChEBI" id="CHEBI:37565"/>
    </ligand>
</feature>
<feature type="binding site" evidence="2">
    <location>
        <position position="39"/>
    </location>
    <ligand>
        <name>Mg(2+)</name>
        <dbReference type="ChEBI" id="CHEBI:18420"/>
    </ligand>
</feature>
<feature type="binding site" description="in other chain" evidence="2">
    <location>
        <position position="129"/>
    </location>
    <ligand>
        <name>IMP</name>
        <dbReference type="ChEBI" id="CHEBI:58053"/>
        <note>ligand shared between dimeric partners</note>
    </ligand>
</feature>
<feature type="binding site" evidence="2">
    <location>
        <position position="143"/>
    </location>
    <ligand>
        <name>IMP</name>
        <dbReference type="ChEBI" id="CHEBI:58053"/>
        <note>ligand shared between dimeric partners</note>
    </ligand>
</feature>
<feature type="binding site" description="in other chain" evidence="2">
    <location>
        <position position="219"/>
    </location>
    <ligand>
        <name>IMP</name>
        <dbReference type="ChEBI" id="CHEBI:58053"/>
        <note>ligand shared between dimeric partners</note>
    </ligand>
</feature>
<feature type="binding site" description="in other chain" evidence="2">
    <location>
        <position position="234"/>
    </location>
    <ligand>
        <name>IMP</name>
        <dbReference type="ChEBI" id="CHEBI:58053"/>
        <note>ligand shared between dimeric partners</note>
    </ligand>
</feature>
<feature type="binding site" evidence="2">
    <location>
        <begin position="294"/>
        <end position="300"/>
    </location>
    <ligand>
        <name>substrate</name>
    </ligand>
</feature>
<feature type="binding site" description="in other chain" evidence="2">
    <location>
        <position position="298"/>
    </location>
    <ligand>
        <name>IMP</name>
        <dbReference type="ChEBI" id="CHEBI:58053"/>
        <note>ligand shared between dimeric partners</note>
    </ligand>
</feature>
<feature type="binding site" evidence="2">
    <location>
        <position position="300"/>
    </location>
    <ligand>
        <name>GTP</name>
        <dbReference type="ChEBI" id="CHEBI:37565"/>
    </ligand>
</feature>
<feature type="binding site" evidence="2">
    <location>
        <begin position="326"/>
        <end position="328"/>
    </location>
    <ligand>
        <name>GTP</name>
        <dbReference type="ChEBI" id="CHEBI:37565"/>
    </ligand>
</feature>
<feature type="binding site" evidence="2">
    <location>
        <begin position="409"/>
        <end position="411"/>
    </location>
    <ligand>
        <name>GTP</name>
        <dbReference type="ChEBI" id="CHEBI:37565"/>
    </ligand>
</feature>
<evidence type="ECO:0000250" key="1"/>
<evidence type="ECO:0000255" key="2">
    <source>
        <dbReference type="HAMAP-Rule" id="MF_03125"/>
    </source>
</evidence>
<evidence type="ECO:0000305" key="3"/>
<sequence length="421" mass="46328">MVTIVLGAQFGDEGKGKITDLLSQSATLCCRAAGGHNAGHTIVHDDITYDFHILPSGLISPDCINLVGTGTVVHVPSFFKELDALKAKGLKDADKRIFISDRAQVCFDLHSVVDGLEEAILAGKKVGTTGKGIGPCYSDKASRRGVRIGEVLEKGVVESKLRALEAGYRRQFGELKYDLEDEVKRFHEYRTKLQPYVVDQMAFMHKHRSSPSVLVEGANALLLDIDHGTYPYVTSSCTGLGGAIQGLTLNPTSIKSIVGVVKAYSTRVGSGPFPTEQNNAVGEKLQRAGREFGVTTGRRRRCGWLDMVMCRYSNAINHYTVINLTKLDILDDFDEIKVAVAYQLDGKLLESFPAQADVLDKVEVKYVTLPGWKSNTMGATKWEHLPTNAQRYVEFIEREMGGVPIRWIGTGPARNHMIERI</sequence>
<keyword id="KW-0963">Cytoplasm</keyword>
<keyword id="KW-0342">GTP-binding</keyword>
<keyword id="KW-0436">Ligase</keyword>
<keyword id="KW-0460">Magnesium</keyword>
<keyword id="KW-0479">Metal-binding</keyword>
<keyword id="KW-0547">Nucleotide-binding</keyword>
<keyword id="KW-0658">Purine biosynthesis</keyword>
<name>PURA_PARBP</name>
<protein>
    <recommendedName>
        <fullName evidence="2">Adenylosuccinate synthetase</fullName>
        <shortName evidence="2">AMPSase</shortName>
        <shortName evidence="2">AdSS</shortName>
        <ecNumber evidence="2">6.3.4.4</ecNumber>
    </recommendedName>
    <alternativeName>
        <fullName evidence="2">IMP--aspartate ligase</fullName>
    </alternativeName>
</protein>
<proteinExistence type="inferred from homology"/>